<accession>Q9RX91</accession>
<organism>
    <name type="scientific">Deinococcus radiodurans (strain ATCC 13939 / DSM 20539 / JCM 16871 / CCUG 27074 / LMG 4051 / NBRC 15346 / NCIMB 9279 / VKM B-1422 / R1)</name>
    <dbReference type="NCBI Taxonomy" id="243230"/>
    <lineage>
        <taxon>Bacteria</taxon>
        <taxon>Thermotogati</taxon>
        <taxon>Deinococcota</taxon>
        <taxon>Deinococci</taxon>
        <taxon>Deinococcales</taxon>
        <taxon>Deinococcaceae</taxon>
        <taxon>Deinococcus</taxon>
    </lineage>
</organism>
<feature type="chain" id="PRO_0000158128" description="Imidazoleglycerol-phosphate dehydratase">
    <location>
        <begin position="1"/>
        <end position="195"/>
    </location>
</feature>
<name>HIS7_DEIRA</name>
<reference key="1">
    <citation type="journal article" date="1999" name="Science">
        <title>Genome sequence of the radioresistant bacterium Deinococcus radiodurans R1.</title>
        <authorList>
            <person name="White O."/>
            <person name="Eisen J.A."/>
            <person name="Heidelberg J.F."/>
            <person name="Hickey E.K."/>
            <person name="Peterson J.D."/>
            <person name="Dodson R.J."/>
            <person name="Haft D.H."/>
            <person name="Gwinn M.L."/>
            <person name="Nelson W.C."/>
            <person name="Richardson D.L."/>
            <person name="Moffat K.S."/>
            <person name="Qin H."/>
            <person name="Jiang L."/>
            <person name="Pamphile W."/>
            <person name="Crosby M."/>
            <person name="Shen M."/>
            <person name="Vamathevan J.J."/>
            <person name="Lam P."/>
            <person name="McDonald L.A."/>
            <person name="Utterback T.R."/>
            <person name="Zalewski C."/>
            <person name="Makarova K.S."/>
            <person name="Aravind L."/>
            <person name="Daly M.J."/>
            <person name="Minton K.W."/>
            <person name="Fleischmann R.D."/>
            <person name="Ketchum K.A."/>
            <person name="Nelson K.E."/>
            <person name="Salzberg S.L."/>
            <person name="Smith H.O."/>
            <person name="Venter J.C."/>
            <person name="Fraser C.M."/>
        </authorList>
    </citation>
    <scope>NUCLEOTIDE SEQUENCE [LARGE SCALE GENOMIC DNA]</scope>
    <source>
        <strain>ATCC 13939 / DSM 20539 / JCM 16871 / CCUG 27074 / LMG 4051 / NBRC 15346 / NCIMB 9279 / VKM B-1422 / R1</strain>
    </source>
</reference>
<protein>
    <recommendedName>
        <fullName evidence="1">Imidazoleglycerol-phosphate dehydratase</fullName>
        <shortName evidence="1">IGPD</shortName>
        <ecNumber evidence="1">4.2.1.19</ecNumber>
    </recommendedName>
</protein>
<keyword id="KW-0028">Amino-acid biosynthesis</keyword>
<keyword id="KW-0963">Cytoplasm</keyword>
<keyword id="KW-0368">Histidine biosynthesis</keyword>
<keyword id="KW-0456">Lyase</keyword>
<keyword id="KW-1185">Reference proteome</keyword>
<evidence type="ECO:0000255" key="1">
    <source>
        <dbReference type="HAMAP-Rule" id="MF_00076"/>
    </source>
</evidence>
<evidence type="ECO:0000305" key="2"/>
<sequence length="195" mass="21093">MPRTAAVTRTTKETDITVRLDLDAAPYEQPATGHGFFDHMLDALARHSRLGISISGTGDLHIEPHHLIEDTGITLGQALSQALGDRKGIERYGSAFVPMDETLAHVVLDLSGRAHLAFEPETLDVYGDAGGMTHYHLREFLRGFCNHAGATLHVRLLAGREAHHVIEAVMKAFARALRDAVAVTSDALPSTKGSL</sequence>
<comment type="catalytic activity">
    <reaction evidence="1">
        <text>D-erythro-1-(imidazol-4-yl)glycerol 3-phosphate = 3-(imidazol-4-yl)-2-oxopropyl phosphate + H2O</text>
        <dbReference type="Rhea" id="RHEA:11040"/>
        <dbReference type="ChEBI" id="CHEBI:15377"/>
        <dbReference type="ChEBI" id="CHEBI:57766"/>
        <dbReference type="ChEBI" id="CHEBI:58278"/>
        <dbReference type="EC" id="4.2.1.19"/>
    </reaction>
</comment>
<comment type="pathway">
    <text evidence="1">Amino-acid biosynthesis; L-histidine biosynthesis; L-histidine from 5-phospho-alpha-D-ribose 1-diphosphate: step 6/9.</text>
</comment>
<comment type="subcellular location">
    <subcellularLocation>
        <location evidence="1">Cytoplasm</location>
    </subcellularLocation>
</comment>
<comment type="similarity">
    <text evidence="1">Belongs to the imidazoleglycerol-phosphate dehydratase family.</text>
</comment>
<comment type="sequence caution" evidence="2">
    <conflict type="erroneous initiation">
        <sequence resource="EMBL-CDS" id="AAF10002"/>
    </conflict>
</comment>
<proteinExistence type="inferred from homology"/>
<dbReference type="EC" id="4.2.1.19" evidence="1"/>
<dbReference type="EMBL" id="AE000513">
    <property type="protein sequence ID" value="AAF10002.1"/>
    <property type="status" value="ALT_INIT"/>
    <property type="molecule type" value="Genomic_DNA"/>
</dbReference>
<dbReference type="PIR" id="F75520">
    <property type="entry name" value="F75520"/>
</dbReference>
<dbReference type="RefSeq" id="NP_294147.1">
    <property type="nucleotide sequence ID" value="NC_001263.1"/>
</dbReference>
<dbReference type="RefSeq" id="WP_027479567.1">
    <property type="nucleotide sequence ID" value="NC_001263.1"/>
</dbReference>
<dbReference type="SMR" id="Q9RX91"/>
<dbReference type="FunCoup" id="Q9RX91">
    <property type="interactions" value="391"/>
</dbReference>
<dbReference type="STRING" id="243230.DR_0424"/>
<dbReference type="PaxDb" id="243230-DR_0424"/>
<dbReference type="EnsemblBacteria" id="AAF10002">
    <property type="protein sequence ID" value="AAF10002"/>
    <property type="gene ID" value="DR_0424"/>
</dbReference>
<dbReference type="GeneID" id="69516656"/>
<dbReference type="KEGG" id="dra:DR_0424"/>
<dbReference type="PATRIC" id="fig|243230.17.peg.598"/>
<dbReference type="eggNOG" id="COG0131">
    <property type="taxonomic scope" value="Bacteria"/>
</dbReference>
<dbReference type="HOGENOM" id="CLU_044308_2_0_0"/>
<dbReference type="InParanoid" id="Q9RX91"/>
<dbReference type="OrthoDB" id="9790411at2"/>
<dbReference type="UniPathway" id="UPA00031">
    <property type="reaction ID" value="UER00011"/>
</dbReference>
<dbReference type="Proteomes" id="UP000002524">
    <property type="component" value="Chromosome 1"/>
</dbReference>
<dbReference type="GO" id="GO:0005737">
    <property type="term" value="C:cytoplasm"/>
    <property type="evidence" value="ECO:0007669"/>
    <property type="project" value="UniProtKB-SubCell"/>
</dbReference>
<dbReference type="GO" id="GO:0004424">
    <property type="term" value="F:imidazoleglycerol-phosphate dehydratase activity"/>
    <property type="evidence" value="ECO:0000318"/>
    <property type="project" value="GO_Central"/>
</dbReference>
<dbReference type="GO" id="GO:0000105">
    <property type="term" value="P:L-histidine biosynthetic process"/>
    <property type="evidence" value="ECO:0000318"/>
    <property type="project" value="GO_Central"/>
</dbReference>
<dbReference type="CDD" id="cd07914">
    <property type="entry name" value="IGPD"/>
    <property type="match status" value="1"/>
</dbReference>
<dbReference type="FunFam" id="3.30.230.40:FF:000001">
    <property type="entry name" value="Imidazoleglycerol-phosphate dehydratase HisB"/>
    <property type="match status" value="1"/>
</dbReference>
<dbReference type="FunFam" id="3.30.230.40:FF:000003">
    <property type="entry name" value="Imidazoleglycerol-phosphate dehydratase HisB"/>
    <property type="match status" value="1"/>
</dbReference>
<dbReference type="Gene3D" id="3.30.230.40">
    <property type="entry name" value="Imidazole glycerol phosphate dehydratase, domain 1"/>
    <property type="match status" value="2"/>
</dbReference>
<dbReference type="HAMAP" id="MF_00076">
    <property type="entry name" value="HisB"/>
    <property type="match status" value="1"/>
</dbReference>
<dbReference type="InterPro" id="IPR038494">
    <property type="entry name" value="IGPD_sf"/>
</dbReference>
<dbReference type="InterPro" id="IPR000807">
    <property type="entry name" value="ImidazoleglycerolP_deHydtase"/>
</dbReference>
<dbReference type="InterPro" id="IPR020565">
    <property type="entry name" value="ImidazoleglycerP_deHydtase_CS"/>
</dbReference>
<dbReference type="InterPro" id="IPR020568">
    <property type="entry name" value="Ribosomal_Su5_D2-typ_SF"/>
</dbReference>
<dbReference type="NCBIfam" id="NF002111">
    <property type="entry name" value="PRK00951.2-1"/>
    <property type="match status" value="1"/>
</dbReference>
<dbReference type="NCBIfam" id="NF002114">
    <property type="entry name" value="PRK00951.2-4"/>
    <property type="match status" value="1"/>
</dbReference>
<dbReference type="PANTHER" id="PTHR23133:SF2">
    <property type="entry name" value="IMIDAZOLEGLYCEROL-PHOSPHATE DEHYDRATASE"/>
    <property type="match status" value="1"/>
</dbReference>
<dbReference type="PANTHER" id="PTHR23133">
    <property type="entry name" value="IMIDAZOLEGLYCEROL-PHOSPHATE DEHYDRATASE HIS7"/>
    <property type="match status" value="1"/>
</dbReference>
<dbReference type="Pfam" id="PF00475">
    <property type="entry name" value="IGPD"/>
    <property type="match status" value="1"/>
</dbReference>
<dbReference type="SUPFAM" id="SSF54211">
    <property type="entry name" value="Ribosomal protein S5 domain 2-like"/>
    <property type="match status" value="2"/>
</dbReference>
<dbReference type="PROSITE" id="PS00954">
    <property type="entry name" value="IGP_DEHYDRATASE_1"/>
    <property type="match status" value="1"/>
</dbReference>
<dbReference type="PROSITE" id="PS00955">
    <property type="entry name" value="IGP_DEHYDRATASE_2"/>
    <property type="match status" value="1"/>
</dbReference>
<gene>
    <name evidence="1" type="primary">hisB</name>
    <name type="ordered locus">DR_0424</name>
</gene>